<accession>Q5UQU8</accession>
<feature type="chain" id="PRO_0000253246" description="Uncharacterized protein L357">
    <location>
        <begin position="1"/>
        <end position="496"/>
    </location>
</feature>
<feature type="region of interest" description="Disordered" evidence="1">
    <location>
        <begin position="118"/>
        <end position="187"/>
    </location>
</feature>
<feature type="compositionally biased region" description="Basic and acidic residues" evidence="1">
    <location>
        <begin position="118"/>
        <end position="129"/>
    </location>
</feature>
<feature type="compositionally biased region" description="Polar residues" evidence="1">
    <location>
        <begin position="151"/>
        <end position="187"/>
    </location>
</feature>
<proteinExistence type="predicted"/>
<organism>
    <name type="scientific">Acanthamoeba polyphaga mimivirus</name>
    <name type="common">APMV</name>
    <dbReference type="NCBI Taxonomy" id="212035"/>
    <lineage>
        <taxon>Viruses</taxon>
        <taxon>Varidnaviria</taxon>
        <taxon>Bamfordvirae</taxon>
        <taxon>Nucleocytoviricota</taxon>
        <taxon>Megaviricetes</taxon>
        <taxon>Imitervirales</taxon>
        <taxon>Mimiviridae</taxon>
        <taxon>Megamimivirinae</taxon>
        <taxon>Mimivirus</taxon>
        <taxon>Mimivirus bradfordmassiliense</taxon>
    </lineage>
</organism>
<sequence length="496" mass="56815">MDKKMRILCEVCLGDKNIDKLINEIRSNIRLKEASVPKCRSMITNIMEKNLEKLSRPPRSREEIEKLYFYLNTQCVNNIIEIIAKKYPNLHVNKKKNACKEQMKRDLDTWGNRRNHVLDRPFIKPRRENSDDEDEQQDGPKNSDFGFMGHTSDSQYASPFENHSITNLPIGQKQPFNNPHQSNRNTSDFESRLQQYMNERDYDLPRNQPPPEIDFTLDHSGEKVMKEKLMRKMGAQSGMNGMDDMGGVCGFNGMSGMNGVGGMDDFYASILGQGSPMAQEGSLGSLNPMNLMTPINRNNQMNPMNQMNPMNQMNPMNQMNPMNQMNPMNQMNPMNQMNPMNPMNMGNQNNQNGIPFMGMGNPLMSVSSTNLMNDQMGYGGFGQSEKNIQFQNDLEKKLAERKIMDLETGQRPEQSAYNDMQSHQMMGSLGSMMNPMGQMNQMGQMNQMGQMGQMNQMDPMNIMNPMNLMNQMNQINSMNQMPMNQMYCNMPNTINC</sequence>
<dbReference type="EMBL" id="AY653733">
    <property type="protein sequence ID" value="AAV50626.1"/>
    <property type="molecule type" value="Genomic_DNA"/>
</dbReference>
<dbReference type="SMR" id="Q5UQU8"/>
<dbReference type="KEGG" id="vg:9924976"/>
<dbReference type="Proteomes" id="UP000001134">
    <property type="component" value="Genome"/>
</dbReference>
<reference key="1">
    <citation type="journal article" date="2004" name="Science">
        <title>The 1.2-megabase genome sequence of Mimivirus.</title>
        <authorList>
            <person name="Raoult D."/>
            <person name="Audic S."/>
            <person name="Robert C."/>
            <person name="Abergel C."/>
            <person name="Renesto P."/>
            <person name="Ogata H."/>
            <person name="La Scola B."/>
            <person name="Susan M."/>
            <person name="Claverie J.-M."/>
        </authorList>
    </citation>
    <scope>NUCLEOTIDE SEQUENCE [LARGE SCALE GENOMIC DNA]</scope>
    <source>
        <strain>Rowbotham-Bradford</strain>
    </source>
</reference>
<name>YL357_MIMIV</name>
<gene>
    <name type="ordered locus">MIMI_L357</name>
</gene>
<evidence type="ECO:0000256" key="1">
    <source>
        <dbReference type="SAM" id="MobiDB-lite"/>
    </source>
</evidence>
<organismHost>
    <name type="scientific">Acanthamoeba polyphaga</name>
    <name type="common">Amoeba</name>
    <dbReference type="NCBI Taxonomy" id="5757"/>
</organismHost>
<keyword id="KW-1185">Reference proteome</keyword>
<protein>
    <recommendedName>
        <fullName>Uncharacterized protein L357</fullName>
    </recommendedName>
</protein>